<dbReference type="EMBL" id="DQ273572">
    <property type="protein sequence ID" value="ABB83626.1"/>
    <property type="molecule type" value="mRNA"/>
</dbReference>
<dbReference type="SMR" id="Q2VBP3"/>
<dbReference type="TopDownProteomics" id="Q2VBP3"/>
<dbReference type="GO" id="GO:0005576">
    <property type="term" value="C:extracellular region"/>
    <property type="evidence" value="ECO:0007669"/>
    <property type="project" value="UniProtKB-SubCell"/>
</dbReference>
<dbReference type="GO" id="GO:0030550">
    <property type="term" value="F:acetylcholine receptor inhibitor activity"/>
    <property type="evidence" value="ECO:0007669"/>
    <property type="project" value="UniProtKB-KW"/>
</dbReference>
<dbReference type="GO" id="GO:0099106">
    <property type="term" value="F:ion channel regulator activity"/>
    <property type="evidence" value="ECO:0007669"/>
    <property type="project" value="UniProtKB-KW"/>
</dbReference>
<dbReference type="GO" id="GO:0090729">
    <property type="term" value="F:toxin activity"/>
    <property type="evidence" value="ECO:0007669"/>
    <property type="project" value="UniProtKB-KW"/>
</dbReference>
<dbReference type="CDD" id="cd00206">
    <property type="entry name" value="TFP_snake_toxin"/>
    <property type="match status" value="1"/>
</dbReference>
<dbReference type="Gene3D" id="2.10.60.10">
    <property type="entry name" value="CD59"/>
    <property type="match status" value="1"/>
</dbReference>
<dbReference type="InterPro" id="IPR003571">
    <property type="entry name" value="Snake_3FTx"/>
</dbReference>
<dbReference type="InterPro" id="IPR045860">
    <property type="entry name" value="Snake_toxin-like_sf"/>
</dbReference>
<dbReference type="InterPro" id="IPR018354">
    <property type="entry name" value="Snake_toxin_con_site"/>
</dbReference>
<dbReference type="InterPro" id="IPR054131">
    <property type="entry name" value="Toxin_cobra-type"/>
</dbReference>
<dbReference type="Pfam" id="PF21947">
    <property type="entry name" value="Toxin_cobra-type"/>
    <property type="match status" value="1"/>
</dbReference>
<dbReference type="SUPFAM" id="SSF57302">
    <property type="entry name" value="Snake toxin-like"/>
    <property type="match status" value="1"/>
</dbReference>
<dbReference type="PROSITE" id="PS00272">
    <property type="entry name" value="SNAKE_TOXIN"/>
    <property type="match status" value="1"/>
</dbReference>
<comment type="function">
    <text evidence="2">Binds with high affinity to muscular (alpha-1/CHRNA1) and neuronal (alpha-7/CHRNA7) nicotinic acetylcholine receptor (nAChR) and inhibits acetylcholine from binding to the receptor, thereby impairing neuromuscular and neuronal transmission.</text>
</comment>
<comment type="subcellular location">
    <subcellularLocation>
        <location evidence="1">Secreted</location>
    </subcellularLocation>
</comment>
<comment type="tissue specificity">
    <text evidence="3">Expressed by the venom gland.</text>
</comment>
<comment type="similarity">
    <text evidence="3">Belongs to the three-finger toxin family. Long-chain subfamily. Type II alpha-neurotoxin sub-subfamily.</text>
</comment>
<proteinExistence type="inferred from homology"/>
<protein>
    <recommendedName>
        <fullName>Long neurotoxin LNTX37</fullName>
    </recommendedName>
</protein>
<sequence length="94" mass="10563">MKTLLLTLVVVTIMCLDLGYTTKCYKTGERIISETCPPGQDLCYMKTWCDVFCGSRGRVIELGCTATCPTVKHHEQITCCSTDNCNPHPKMKQR</sequence>
<accession>Q2VBP3</accession>
<keyword id="KW-0008">Acetylcholine receptor inhibiting toxin</keyword>
<keyword id="KW-1015">Disulfide bond</keyword>
<keyword id="KW-0872">Ion channel impairing toxin</keyword>
<keyword id="KW-0528">Neurotoxin</keyword>
<keyword id="KW-0629">Postsynaptic neurotoxin</keyword>
<keyword id="KW-0964">Secreted</keyword>
<keyword id="KW-0732">Signal</keyword>
<keyword id="KW-0800">Toxin</keyword>
<organism>
    <name type="scientific">Ophiophagus hannah</name>
    <name type="common">King cobra</name>
    <name type="synonym">Naja hannah</name>
    <dbReference type="NCBI Taxonomy" id="8665"/>
    <lineage>
        <taxon>Eukaryota</taxon>
        <taxon>Metazoa</taxon>
        <taxon>Chordata</taxon>
        <taxon>Craniata</taxon>
        <taxon>Vertebrata</taxon>
        <taxon>Euteleostomi</taxon>
        <taxon>Lepidosauria</taxon>
        <taxon>Squamata</taxon>
        <taxon>Bifurcata</taxon>
        <taxon>Unidentata</taxon>
        <taxon>Episquamata</taxon>
        <taxon>Toxicofera</taxon>
        <taxon>Serpentes</taxon>
        <taxon>Colubroidea</taxon>
        <taxon>Elapidae</taxon>
        <taxon>Elapinae</taxon>
        <taxon>Ophiophagus</taxon>
    </lineage>
</organism>
<evidence type="ECO:0000250" key="1"/>
<evidence type="ECO:0000250" key="2">
    <source>
        <dbReference type="UniProtKB" id="P60615"/>
    </source>
</evidence>
<evidence type="ECO:0000305" key="3"/>
<reference key="1">
    <citation type="journal article" date="2006" name="Biochem. J.">
        <title>Novel genes encoding six kinds of three-finger toxins in Ophiophagus hannah (king cobra) and function characterization of two recombinant long-chain neurotoxins.</title>
        <authorList>
            <person name="Li J."/>
            <person name="Zhang H."/>
            <person name="Liu J."/>
            <person name="Xu K."/>
        </authorList>
    </citation>
    <scope>NUCLEOTIDE SEQUENCE [MRNA]</scope>
    <source>
        <tissue>Venom gland</tissue>
    </source>
</reference>
<feature type="signal peptide" evidence="1">
    <location>
        <begin position="1"/>
        <end position="21"/>
    </location>
</feature>
<feature type="chain" id="PRO_5000006482" description="Long neurotoxin LNTX37">
    <location>
        <begin position="22"/>
        <end position="94"/>
    </location>
</feature>
<feature type="disulfide bond" evidence="1">
    <location>
        <begin position="24"/>
        <end position="43"/>
    </location>
</feature>
<feature type="disulfide bond" evidence="1">
    <location>
        <begin position="36"/>
        <end position="64"/>
    </location>
</feature>
<feature type="disulfide bond" evidence="1">
    <location>
        <begin position="49"/>
        <end position="53"/>
    </location>
</feature>
<feature type="disulfide bond" evidence="1">
    <location>
        <begin position="68"/>
        <end position="79"/>
    </location>
</feature>
<feature type="disulfide bond" evidence="1">
    <location>
        <begin position="80"/>
        <end position="85"/>
    </location>
</feature>
<name>3L23X_OPHHA</name>